<name>Y2240_ARCFU</name>
<reference key="1">
    <citation type="journal article" date="1997" name="Nature">
        <title>The complete genome sequence of the hyperthermophilic, sulphate-reducing archaeon Archaeoglobus fulgidus.</title>
        <authorList>
            <person name="Klenk H.-P."/>
            <person name="Clayton R.A."/>
            <person name="Tomb J.-F."/>
            <person name="White O."/>
            <person name="Nelson K.E."/>
            <person name="Ketchum K.A."/>
            <person name="Dodson R.J."/>
            <person name="Gwinn M.L."/>
            <person name="Hickey E.K."/>
            <person name="Peterson J.D."/>
            <person name="Richardson D.L."/>
            <person name="Kerlavage A.R."/>
            <person name="Graham D.E."/>
            <person name="Kyrpides N.C."/>
            <person name="Fleischmann R.D."/>
            <person name="Quackenbush J."/>
            <person name="Lee N.H."/>
            <person name="Sutton G.G."/>
            <person name="Gill S.R."/>
            <person name="Kirkness E.F."/>
            <person name="Dougherty B.A."/>
            <person name="McKenney K."/>
            <person name="Adams M.D."/>
            <person name="Loftus B.J."/>
            <person name="Peterson S.N."/>
            <person name="Reich C.I."/>
            <person name="McNeil L.K."/>
            <person name="Badger J.H."/>
            <person name="Glodek A."/>
            <person name="Zhou L."/>
            <person name="Overbeek R."/>
            <person name="Gocayne J.D."/>
            <person name="Weidman J.F."/>
            <person name="McDonald L.A."/>
            <person name="Utterback T.R."/>
            <person name="Cotton M.D."/>
            <person name="Spriggs T."/>
            <person name="Artiach P."/>
            <person name="Kaine B.P."/>
            <person name="Sykes S.M."/>
            <person name="Sadow P.W."/>
            <person name="D'Andrea K.P."/>
            <person name="Bowman C."/>
            <person name="Fujii C."/>
            <person name="Garland S.A."/>
            <person name="Mason T.M."/>
            <person name="Olsen G.J."/>
            <person name="Fraser C.M."/>
            <person name="Smith H.O."/>
            <person name="Woese C.R."/>
            <person name="Venter J.C."/>
        </authorList>
    </citation>
    <scope>NUCLEOTIDE SEQUENCE [LARGE SCALE GENOMIC DNA]</scope>
    <source>
        <strain>ATCC 49558 / DSM 4304 / JCM 9628 / NBRC 100126 / VC-16</strain>
    </source>
</reference>
<gene>
    <name type="ordered locus">AF_2240</name>
</gene>
<organism>
    <name type="scientific">Archaeoglobus fulgidus (strain ATCC 49558 / DSM 4304 / JCM 9628 / NBRC 100126 / VC-16)</name>
    <dbReference type="NCBI Taxonomy" id="224325"/>
    <lineage>
        <taxon>Archaea</taxon>
        <taxon>Methanobacteriati</taxon>
        <taxon>Methanobacteriota</taxon>
        <taxon>Archaeoglobi</taxon>
        <taxon>Archaeoglobales</taxon>
        <taxon>Archaeoglobaceae</taxon>
        <taxon>Archaeoglobus</taxon>
    </lineage>
</organism>
<keyword id="KW-1185">Reference proteome</keyword>
<proteinExistence type="predicted"/>
<protein>
    <recommendedName>
        <fullName>Uncharacterized protein AF_2240</fullName>
    </recommendedName>
</protein>
<feature type="chain" id="PRO_0000128128" description="Uncharacterized protein AF_2240">
    <location>
        <begin position="1"/>
        <end position="63"/>
    </location>
</feature>
<dbReference type="EMBL" id="AE000782">
    <property type="protein sequence ID" value="AAB89019.1"/>
    <property type="molecule type" value="Genomic_DNA"/>
</dbReference>
<dbReference type="PIR" id="H69529">
    <property type="entry name" value="H69529"/>
</dbReference>
<dbReference type="RefSeq" id="WP_010879729.1">
    <property type="nucleotide sequence ID" value="NC_000917.1"/>
</dbReference>
<dbReference type="SMR" id="O28043"/>
<dbReference type="STRING" id="224325.AF_2240"/>
<dbReference type="PaxDb" id="224325-AF_2240"/>
<dbReference type="EnsemblBacteria" id="AAB89019">
    <property type="protein sequence ID" value="AAB89019"/>
    <property type="gene ID" value="AF_2240"/>
</dbReference>
<dbReference type="KEGG" id="afu:AF_2240"/>
<dbReference type="eggNOG" id="arCOG10398">
    <property type="taxonomic scope" value="Archaea"/>
</dbReference>
<dbReference type="HOGENOM" id="CLU_2893022_0_0_2"/>
<dbReference type="OrthoDB" id="51474at2157"/>
<dbReference type="Proteomes" id="UP000002199">
    <property type="component" value="Chromosome"/>
</dbReference>
<dbReference type="GO" id="GO:0046872">
    <property type="term" value="F:metal ion binding"/>
    <property type="evidence" value="ECO:0007669"/>
    <property type="project" value="InterPro"/>
</dbReference>
<dbReference type="GO" id="GO:0016491">
    <property type="term" value="F:oxidoreductase activity"/>
    <property type="evidence" value="ECO:0007669"/>
    <property type="project" value="InterPro"/>
</dbReference>
<dbReference type="Gene3D" id="1.20.1260.10">
    <property type="match status" value="1"/>
</dbReference>
<dbReference type="InterPro" id="IPR012347">
    <property type="entry name" value="Ferritin-like"/>
</dbReference>
<dbReference type="InterPro" id="IPR009078">
    <property type="entry name" value="Ferritin-like_SF"/>
</dbReference>
<dbReference type="InterPro" id="IPR003251">
    <property type="entry name" value="Rr_diiron-bd_dom"/>
</dbReference>
<dbReference type="Pfam" id="PF02915">
    <property type="entry name" value="Rubrerythrin"/>
    <property type="match status" value="1"/>
</dbReference>
<dbReference type="SUPFAM" id="SSF47240">
    <property type="entry name" value="Ferritin-like"/>
    <property type="match status" value="1"/>
</dbReference>
<sequence>MSPEEILQKAIEMEREAIETYAEMKREADRETAELLDFLISQEREHIKLLNDRLKVVRLLKKE</sequence>
<accession>O28043</accession>